<accession>C3LJZ1</accession>
<gene>
    <name evidence="1" type="primary">glmM</name>
    <name type="ordered locus">BAMEG_0187</name>
</gene>
<comment type="function">
    <text evidence="1">Catalyzes the conversion of glucosamine-6-phosphate to glucosamine-1-phosphate.</text>
</comment>
<comment type="catalytic activity">
    <reaction evidence="1">
        <text>alpha-D-glucosamine 1-phosphate = D-glucosamine 6-phosphate</text>
        <dbReference type="Rhea" id="RHEA:23424"/>
        <dbReference type="ChEBI" id="CHEBI:58516"/>
        <dbReference type="ChEBI" id="CHEBI:58725"/>
        <dbReference type="EC" id="5.4.2.10"/>
    </reaction>
</comment>
<comment type="cofactor">
    <cofactor evidence="1">
        <name>Mg(2+)</name>
        <dbReference type="ChEBI" id="CHEBI:18420"/>
    </cofactor>
    <text evidence="1">Binds 1 Mg(2+) ion per subunit.</text>
</comment>
<comment type="PTM">
    <text evidence="1">Activated by phosphorylation.</text>
</comment>
<comment type="similarity">
    <text evidence="1">Belongs to the phosphohexose mutase family.</text>
</comment>
<reference key="1">
    <citation type="submission" date="2008-10" db="EMBL/GenBank/DDBJ databases">
        <title>Genome sequence of Bacillus anthracis str. CDC 684.</title>
        <authorList>
            <person name="Dodson R.J."/>
            <person name="Munk A.C."/>
            <person name="Brettin T."/>
            <person name="Bruce D."/>
            <person name="Detter C."/>
            <person name="Tapia R."/>
            <person name="Han C."/>
            <person name="Sutton G."/>
            <person name="Sims D."/>
        </authorList>
    </citation>
    <scope>NUCLEOTIDE SEQUENCE [LARGE SCALE GENOMIC DNA]</scope>
    <source>
        <strain>CDC 684 / NRRL 3495</strain>
    </source>
</reference>
<feature type="chain" id="PRO_1000185349" description="Phosphoglucosamine mutase">
    <location>
        <begin position="1"/>
        <end position="448"/>
    </location>
</feature>
<feature type="active site" description="Phosphoserine intermediate" evidence="1">
    <location>
        <position position="100"/>
    </location>
</feature>
<feature type="binding site" description="via phosphate group" evidence="1">
    <location>
        <position position="100"/>
    </location>
    <ligand>
        <name>Mg(2+)</name>
        <dbReference type="ChEBI" id="CHEBI:18420"/>
    </ligand>
</feature>
<feature type="binding site" evidence="1">
    <location>
        <position position="240"/>
    </location>
    <ligand>
        <name>Mg(2+)</name>
        <dbReference type="ChEBI" id="CHEBI:18420"/>
    </ligand>
</feature>
<feature type="binding site" evidence="1">
    <location>
        <position position="242"/>
    </location>
    <ligand>
        <name>Mg(2+)</name>
        <dbReference type="ChEBI" id="CHEBI:18420"/>
    </ligand>
</feature>
<feature type="binding site" evidence="1">
    <location>
        <position position="244"/>
    </location>
    <ligand>
        <name>Mg(2+)</name>
        <dbReference type="ChEBI" id="CHEBI:18420"/>
    </ligand>
</feature>
<feature type="modified residue" description="Phosphoserine" evidence="1">
    <location>
        <position position="100"/>
    </location>
</feature>
<evidence type="ECO:0000255" key="1">
    <source>
        <dbReference type="HAMAP-Rule" id="MF_01554"/>
    </source>
</evidence>
<keyword id="KW-0413">Isomerase</keyword>
<keyword id="KW-0460">Magnesium</keyword>
<keyword id="KW-0479">Metal-binding</keyword>
<keyword id="KW-0597">Phosphoprotein</keyword>
<proteinExistence type="inferred from homology"/>
<name>GLMM_BACAC</name>
<dbReference type="EC" id="5.4.2.10" evidence="1"/>
<dbReference type="EMBL" id="CP001215">
    <property type="protein sequence ID" value="ACP15691.1"/>
    <property type="molecule type" value="Genomic_DNA"/>
</dbReference>
<dbReference type="RefSeq" id="WP_000521474.1">
    <property type="nucleotide sequence ID" value="NC_012581.1"/>
</dbReference>
<dbReference type="SMR" id="C3LJZ1"/>
<dbReference type="GeneID" id="75083449"/>
<dbReference type="KEGG" id="bah:BAMEG_0187"/>
<dbReference type="HOGENOM" id="CLU_016950_7_0_9"/>
<dbReference type="GO" id="GO:0005829">
    <property type="term" value="C:cytosol"/>
    <property type="evidence" value="ECO:0007669"/>
    <property type="project" value="TreeGrafter"/>
</dbReference>
<dbReference type="GO" id="GO:0000287">
    <property type="term" value="F:magnesium ion binding"/>
    <property type="evidence" value="ECO:0007669"/>
    <property type="project" value="UniProtKB-UniRule"/>
</dbReference>
<dbReference type="GO" id="GO:0008966">
    <property type="term" value="F:phosphoglucosamine mutase activity"/>
    <property type="evidence" value="ECO:0007669"/>
    <property type="project" value="UniProtKB-UniRule"/>
</dbReference>
<dbReference type="GO" id="GO:0004615">
    <property type="term" value="F:phosphomannomutase activity"/>
    <property type="evidence" value="ECO:0007669"/>
    <property type="project" value="TreeGrafter"/>
</dbReference>
<dbReference type="GO" id="GO:0005975">
    <property type="term" value="P:carbohydrate metabolic process"/>
    <property type="evidence" value="ECO:0007669"/>
    <property type="project" value="InterPro"/>
</dbReference>
<dbReference type="GO" id="GO:0009252">
    <property type="term" value="P:peptidoglycan biosynthetic process"/>
    <property type="evidence" value="ECO:0007669"/>
    <property type="project" value="TreeGrafter"/>
</dbReference>
<dbReference type="GO" id="GO:0006048">
    <property type="term" value="P:UDP-N-acetylglucosamine biosynthetic process"/>
    <property type="evidence" value="ECO:0007669"/>
    <property type="project" value="TreeGrafter"/>
</dbReference>
<dbReference type="CDD" id="cd05802">
    <property type="entry name" value="GlmM"/>
    <property type="match status" value="1"/>
</dbReference>
<dbReference type="FunFam" id="3.30.310.50:FF:000001">
    <property type="entry name" value="Phosphoglucosamine mutase"/>
    <property type="match status" value="1"/>
</dbReference>
<dbReference type="FunFam" id="3.40.120.10:FF:000001">
    <property type="entry name" value="Phosphoglucosamine mutase"/>
    <property type="match status" value="1"/>
</dbReference>
<dbReference type="FunFam" id="3.40.120.10:FF:000002">
    <property type="entry name" value="Phosphoglucosamine mutase"/>
    <property type="match status" value="1"/>
</dbReference>
<dbReference type="Gene3D" id="3.40.120.10">
    <property type="entry name" value="Alpha-D-Glucose-1,6-Bisphosphate, subunit A, domain 3"/>
    <property type="match status" value="3"/>
</dbReference>
<dbReference type="Gene3D" id="3.30.310.50">
    <property type="entry name" value="Alpha-D-phosphohexomutase, C-terminal domain"/>
    <property type="match status" value="1"/>
</dbReference>
<dbReference type="HAMAP" id="MF_01554_B">
    <property type="entry name" value="GlmM_B"/>
    <property type="match status" value="1"/>
</dbReference>
<dbReference type="InterPro" id="IPR005844">
    <property type="entry name" value="A-D-PHexomutase_a/b/a-I"/>
</dbReference>
<dbReference type="InterPro" id="IPR016055">
    <property type="entry name" value="A-D-PHexomutase_a/b/a-I/II/III"/>
</dbReference>
<dbReference type="InterPro" id="IPR005845">
    <property type="entry name" value="A-D-PHexomutase_a/b/a-II"/>
</dbReference>
<dbReference type="InterPro" id="IPR005846">
    <property type="entry name" value="A-D-PHexomutase_a/b/a-III"/>
</dbReference>
<dbReference type="InterPro" id="IPR005843">
    <property type="entry name" value="A-D-PHexomutase_C"/>
</dbReference>
<dbReference type="InterPro" id="IPR036900">
    <property type="entry name" value="A-D-PHexomutase_C_sf"/>
</dbReference>
<dbReference type="InterPro" id="IPR016066">
    <property type="entry name" value="A-D-PHexomutase_CS"/>
</dbReference>
<dbReference type="InterPro" id="IPR005841">
    <property type="entry name" value="Alpha-D-phosphohexomutase_SF"/>
</dbReference>
<dbReference type="InterPro" id="IPR006352">
    <property type="entry name" value="GlmM_bact"/>
</dbReference>
<dbReference type="InterPro" id="IPR050060">
    <property type="entry name" value="Phosphoglucosamine_mutase"/>
</dbReference>
<dbReference type="NCBIfam" id="TIGR01455">
    <property type="entry name" value="glmM"/>
    <property type="match status" value="1"/>
</dbReference>
<dbReference type="NCBIfam" id="NF008139">
    <property type="entry name" value="PRK10887.1"/>
    <property type="match status" value="1"/>
</dbReference>
<dbReference type="PANTHER" id="PTHR42946:SF1">
    <property type="entry name" value="PHOSPHOGLUCOMUTASE (ALPHA-D-GLUCOSE-1,6-BISPHOSPHATE-DEPENDENT)"/>
    <property type="match status" value="1"/>
</dbReference>
<dbReference type="PANTHER" id="PTHR42946">
    <property type="entry name" value="PHOSPHOHEXOSE MUTASE"/>
    <property type="match status" value="1"/>
</dbReference>
<dbReference type="Pfam" id="PF02878">
    <property type="entry name" value="PGM_PMM_I"/>
    <property type="match status" value="1"/>
</dbReference>
<dbReference type="Pfam" id="PF02879">
    <property type="entry name" value="PGM_PMM_II"/>
    <property type="match status" value="1"/>
</dbReference>
<dbReference type="Pfam" id="PF02880">
    <property type="entry name" value="PGM_PMM_III"/>
    <property type="match status" value="1"/>
</dbReference>
<dbReference type="Pfam" id="PF00408">
    <property type="entry name" value="PGM_PMM_IV"/>
    <property type="match status" value="1"/>
</dbReference>
<dbReference type="PRINTS" id="PR00509">
    <property type="entry name" value="PGMPMM"/>
</dbReference>
<dbReference type="SUPFAM" id="SSF55957">
    <property type="entry name" value="Phosphoglucomutase, C-terminal domain"/>
    <property type="match status" value="1"/>
</dbReference>
<dbReference type="SUPFAM" id="SSF53738">
    <property type="entry name" value="Phosphoglucomutase, first 3 domains"/>
    <property type="match status" value="3"/>
</dbReference>
<dbReference type="PROSITE" id="PS00710">
    <property type="entry name" value="PGM_PMM"/>
    <property type="match status" value="1"/>
</dbReference>
<sequence length="448" mass="48417">MGKYFGTDGVRGVANKELTPELAFKIGRFGGYVLTKDTDRPKVIIGRDTRISGHMLEGALVAGLLSTGAEVMRLGVISTPGVAYLTKALDAQAGVMISASHNPVQDNGIKFFGSDGFKLTDEQEAEIEALLDKEVDELPRPTGTNLGQVSDYFEGGQKYLQYIKQTVEEDFSGLHIALDCAHGATSSLAPYLFADLEADISTMGTSPNGMNINDGVGSTHPEVLAELVKEKGADIGLAFDGDGDRLIAVDEKGNIVDGDQIMFICAKYMKETGQLKHNTVVSTVMSNLGFYKALEANGITSDKTAVGDRYVMEEMKRGGYNLGGEQSGHIILLDYITTGDGMLSALQLVNIMKMTKKPLSELAGEMTKFPQLLVNVRVTDKKLALENEKIKEIIRVVEEEMNGDGRILVRPSGTEPLIRVMAEAPTQEVCDAYVHRIVEVVKAEVGAE</sequence>
<protein>
    <recommendedName>
        <fullName evidence="1">Phosphoglucosamine mutase</fullName>
        <ecNumber evidence="1">5.4.2.10</ecNumber>
    </recommendedName>
</protein>
<organism>
    <name type="scientific">Bacillus anthracis (strain CDC 684 / NRRL 3495)</name>
    <dbReference type="NCBI Taxonomy" id="568206"/>
    <lineage>
        <taxon>Bacteria</taxon>
        <taxon>Bacillati</taxon>
        <taxon>Bacillota</taxon>
        <taxon>Bacilli</taxon>
        <taxon>Bacillales</taxon>
        <taxon>Bacillaceae</taxon>
        <taxon>Bacillus</taxon>
        <taxon>Bacillus cereus group</taxon>
    </lineage>
</organism>